<gene>
    <name type="primary">VAR1</name>
</gene>
<reference key="1">
    <citation type="journal article" date="2005" name="FEMS Yeast Res.">
        <title>Complete nucleotide sequence of the mitochondrial DNA from Kluyveromyces lactis.</title>
        <authorList>
            <person name="Zivanovic Y."/>
            <person name="Wincker P."/>
            <person name="Vacherie B."/>
            <person name="Bolotin-Fukuhara M."/>
            <person name="Fukuhara H."/>
        </authorList>
    </citation>
    <scope>NUCLEOTIDE SEQUENCE [LARGE SCALE GENOMIC DNA]</scope>
    <source>
        <strain>ATCC 76492 / CBS 2359/152 / CLIB 210</strain>
    </source>
</reference>
<evidence type="ECO:0000250" key="1"/>
<evidence type="ECO:0000305" key="2"/>
<dbReference type="EMBL" id="AY654900">
    <property type="protein sequence ID" value="AAT64955.1"/>
    <property type="molecule type" value="Genomic_DNA"/>
</dbReference>
<dbReference type="RefSeq" id="YP_054503.1">
    <property type="nucleotide sequence ID" value="NC_006077.1"/>
</dbReference>
<dbReference type="SMR" id="Q6DN56"/>
<dbReference type="FunCoup" id="Q6DN56">
    <property type="interactions" value="90"/>
</dbReference>
<dbReference type="STRING" id="284590.Q6DN56"/>
<dbReference type="PaxDb" id="284590-Q6DN56"/>
<dbReference type="GeneID" id="2914075"/>
<dbReference type="KEGG" id="kla:KllafMp07"/>
<dbReference type="InParanoid" id="Q6DN56"/>
<dbReference type="GO" id="GO:0005739">
    <property type="term" value="C:mitochondrion"/>
    <property type="evidence" value="ECO:0007669"/>
    <property type="project" value="UniProtKB-SubCell"/>
</dbReference>
<dbReference type="GO" id="GO:1990904">
    <property type="term" value="C:ribonucleoprotein complex"/>
    <property type="evidence" value="ECO:0007669"/>
    <property type="project" value="UniProtKB-KW"/>
</dbReference>
<dbReference type="GO" id="GO:0005840">
    <property type="term" value="C:ribosome"/>
    <property type="evidence" value="ECO:0007669"/>
    <property type="project" value="UniProtKB-KW"/>
</dbReference>
<dbReference type="GO" id="GO:0003735">
    <property type="term" value="F:structural constituent of ribosome"/>
    <property type="evidence" value="ECO:0007669"/>
    <property type="project" value="InterPro"/>
</dbReference>
<dbReference type="GO" id="GO:0006412">
    <property type="term" value="P:translation"/>
    <property type="evidence" value="ECO:0007669"/>
    <property type="project" value="InterPro"/>
</dbReference>
<dbReference type="InterPro" id="IPR007980">
    <property type="entry name" value="Ribosomal_uS3m_fun"/>
</dbReference>
<dbReference type="Pfam" id="PF05316">
    <property type="entry name" value="VAR1"/>
    <property type="match status" value="1"/>
</dbReference>
<proteinExistence type="inferred from homology"/>
<keyword id="KW-0496">Mitochondrion</keyword>
<keyword id="KW-0687">Ribonucleoprotein</keyword>
<keyword id="KW-0689">Ribosomal protein</keyword>
<organism>
    <name type="scientific">Kluyveromyces lactis (strain ATCC 8585 / CBS 2359 / DSM 70799 / NBRC 1267 / NRRL Y-1140 / WM37)</name>
    <name type="common">Yeast</name>
    <name type="synonym">Candida sphaerica</name>
    <dbReference type="NCBI Taxonomy" id="284590"/>
    <lineage>
        <taxon>Eukaryota</taxon>
        <taxon>Fungi</taxon>
        <taxon>Dikarya</taxon>
        <taxon>Ascomycota</taxon>
        <taxon>Saccharomycotina</taxon>
        <taxon>Saccharomycetes</taxon>
        <taxon>Saccharomycetales</taxon>
        <taxon>Saccharomycetaceae</taxon>
        <taxon>Kluyveromyces</taxon>
    </lineage>
</organism>
<sequence>MNINTMNKHTTNLNIIKNINNINNLNSIKELLLLLNNKRLNRSLNKTYIWDYLNELSNKGVKLQHLNNINSWSSQIYKFNKTEEINNTIYDRLVTKLLTKLLVLNINNKIYKLIISKPIFEHSINKVNIKFFYYLSYKNINKNINNNNNLINNIYSNYKFNINSKLINLLNNNINSISNILSLYYNKDVSFEPIQLKYNYMNSDILAKSLKIMNSSSKRSLSMNRIKNLMNNMPKLNDKLISQTYINNINNIMFNKYNNIIKSINNNNNNNPADSSPGNPRGGAAGKLYNIIYENNNINTIPNNILMFKYLVGWSIQLKGRLSNNKSISRSNTMNILNGTFQNYKYIWGNQMVNNYKLNYIPVNHNITNISDVNKNGKYNIKVKLNTI</sequence>
<protein>
    <recommendedName>
        <fullName evidence="2">Small ribosomal subunit protein uS3m</fullName>
    </recommendedName>
    <alternativeName>
        <fullName>Ribosomal protein VAR1, mitochondrial</fullName>
    </alternativeName>
</protein>
<accession>Q6DN56</accession>
<name>RMAR_KLULA</name>
<comment type="function">
    <text evidence="1">Essential for mitochondrial protein synthesis and required for the maturation of small ribosomal subunits.</text>
</comment>
<comment type="subcellular location">
    <subcellularLocation>
        <location>Mitochondrion</location>
    </subcellularLocation>
</comment>
<comment type="similarity">
    <text evidence="2">Belongs to the universal ribosomal protein uS3 family.</text>
</comment>
<feature type="chain" id="PRO_0000220071" description="Small ribosomal subunit protein uS3m">
    <location>
        <begin position="1"/>
        <end position="388"/>
    </location>
</feature>
<geneLocation type="mitochondrion"/>